<proteinExistence type="inferred from homology"/>
<feature type="chain" id="PRO_1000013343" description="Large ribosomal subunit protein bL34">
    <location>
        <begin position="1"/>
        <end position="44"/>
    </location>
</feature>
<reference key="1">
    <citation type="journal article" date="2007" name="PLoS ONE">
        <title>Complete genomic characterization of a pathogenic A.II strain of Francisella tularensis subspecies tularensis.</title>
        <authorList>
            <person name="Beckstrom-Sternberg S.M."/>
            <person name="Auerbach R.K."/>
            <person name="Godbole S."/>
            <person name="Pearson J.V."/>
            <person name="Beckstrom-Sternberg J.S."/>
            <person name="Deng Z."/>
            <person name="Munk C."/>
            <person name="Kubota K."/>
            <person name="Zhou Y."/>
            <person name="Bruce D."/>
            <person name="Noronha J."/>
            <person name="Scheuermann R.H."/>
            <person name="Wang A."/>
            <person name="Wei X."/>
            <person name="Wang J."/>
            <person name="Hao J."/>
            <person name="Wagner D.M."/>
            <person name="Brettin T.S."/>
            <person name="Brown N."/>
            <person name="Gilna P."/>
            <person name="Keim P.S."/>
        </authorList>
    </citation>
    <scope>NUCLEOTIDE SEQUENCE [LARGE SCALE GENOMIC DNA]</scope>
    <source>
        <strain>WY96-3418</strain>
    </source>
</reference>
<dbReference type="EMBL" id="CP000608">
    <property type="protein sequence ID" value="ABO47515.1"/>
    <property type="molecule type" value="Genomic_DNA"/>
</dbReference>
<dbReference type="RefSeq" id="WP_003014180.1">
    <property type="nucleotide sequence ID" value="NC_009257.1"/>
</dbReference>
<dbReference type="SMR" id="A4J014"/>
<dbReference type="GeneID" id="93255665"/>
<dbReference type="KEGG" id="ftw:FTW_1855"/>
<dbReference type="HOGENOM" id="CLU_129938_2_0_6"/>
<dbReference type="GO" id="GO:1990904">
    <property type="term" value="C:ribonucleoprotein complex"/>
    <property type="evidence" value="ECO:0007669"/>
    <property type="project" value="UniProtKB-KW"/>
</dbReference>
<dbReference type="GO" id="GO:0005840">
    <property type="term" value="C:ribosome"/>
    <property type="evidence" value="ECO:0007669"/>
    <property type="project" value="UniProtKB-KW"/>
</dbReference>
<dbReference type="GO" id="GO:0003735">
    <property type="term" value="F:structural constituent of ribosome"/>
    <property type="evidence" value="ECO:0007669"/>
    <property type="project" value="InterPro"/>
</dbReference>
<dbReference type="GO" id="GO:0006412">
    <property type="term" value="P:translation"/>
    <property type="evidence" value="ECO:0007669"/>
    <property type="project" value="UniProtKB-UniRule"/>
</dbReference>
<dbReference type="FunFam" id="1.10.287.3980:FF:000001">
    <property type="entry name" value="Mitochondrial ribosomal protein L34"/>
    <property type="match status" value="1"/>
</dbReference>
<dbReference type="Gene3D" id="1.10.287.3980">
    <property type="match status" value="1"/>
</dbReference>
<dbReference type="HAMAP" id="MF_00391">
    <property type="entry name" value="Ribosomal_bL34"/>
    <property type="match status" value="1"/>
</dbReference>
<dbReference type="InterPro" id="IPR000271">
    <property type="entry name" value="Ribosomal_bL34"/>
</dbReference>
<dbReference type="InterPro" id="IPR020939">
    <property type="entry name" value="Ribosomal_bL34_CS"/>
</dbReference>
<dbReference type="NCBIfam" id="TIGR01030">
    <property type="entry name" value="rpmH_bact"/>
    <property type="match status" value="1"/>
</dbReference>
<dbReference type="PANTHER" id="PTHR14503:SF4">
    <property type="entry name" value="LARGE RIBOSOMAL SUBUNIT PROTEIN BL34M"/>
    <property type="match status" value="1"/>
</dbReference>
<dbReference type="PANTHER" id="PTHR14503">
    <property type="entry name" value="MITOCHONDRIAL RIBOSOMAL PROTEIN 34 FAMILY MEMBER"/>
    <property type="match status" value="1"/>
</dbReference>
<dbReference type="Pfam" id="PF00468">
    <property type="entry name" value="Ribosomal_L34"/>
    <property type="match status" value="1"/>
</dbReference>
<dbReference type="PROSITE" id="PS00784">
    <property type="entry name" value="RIBOSOMAL_L34"/>
    <property type="match status" value="1"/>
</dbReference>
<accession>A4J014</accession>
<gene>
    <name evidence="1" type="primary">rpmH</name>
    <name type="ordered locus">FTW_1855</name>
</gene>
<protein>
    <recommendedName>
        <fullName evidence="1">Large ribosomal subunit protein bL34</fullName>
    </recommendedName>
    <alternativeName>
        <fullName evidence="2">50S ribosomal protein L34</fullName>
    </alternativeName>
</protein>
<evidence type="ECO:0000255" key="1">
    <source>
        <dbReference type="HAMAP-Rule" id="MF_00391"/>
    </source>
</evidence>
<evidence type="ECO:0000305" key="2"/>
<sequence>MKRTFQPSNLKRKRTHGFRARMKTLSGRKVIRNRRAKGRAKLAA</sequence>
<name>RL34_FRATW</name>
<comment type="similarity">
    <text evidence="1">Belongs to the bacterial ribosomal protein bL34 family.</text>
</comment>
<keyword id="KW-0687">Ribonucleoprotein</keyword>
<keyword id="KW-0689">Ribosomal protein</keyword>
<organism>
    <name type="scientific">Francisella tularensis subsp. tularensis (strain WY96-3418)</name>
    <dbReference type="NCBI Taxonomy" id="418136"/>
    <lineage>
        <taxon>Bacteria</taxon>
        <taxon>Pseudomonadati</taxon>
        <taxon>Pseudomonadota</taxon>
        <taxon>Gammaproteobacteria</taxon>
        <taxon>Thiotrichales</taxon>
        <taxon>Francisellaceae</taxon>
        <taxon>Francisella</taxon>
    </lineage>
</organism>